<name>RNPA_STRP3</name>
<gene>
    <name evidence="1" type="primary">rnpA</name>
    <name type="ordered locus">SpyM3_0175</name>
</gene>
<protein>
    <recommendedName>
        <fullName evidence="1">Ribonuclease P protein component</fullName>
        <shortName evidence="1">RNase P protein</shortName>
        <shortName evidence="1">RNaseP protein</shortName>
        <ecNumber evidence="1">3.1.26.5</ecNumber>
    </recommendedName>
    <alternativeName>
        <fullName evidence="1">Protein C5</fullName>
    </alternativeName>
</protein>
<feature type="chain" id="PRO_0000198543" description="Ribonuclease P protein component">
    <location>
        <begin position="1"/>
        <end position="119"/>
    </location>
</feature>
<keyword id="KW-0255">Endonuclease</keyword>
<keyword id="KW-0378">Hydrolase</keyword>
<keyword id="KW-0540">Nuclease</keyword>
<keyword id="KW-0694">RNA-binding</keyword>
<keyword id="KW-0819">tRNA processing</keyword>
<organism>
    <name type="scientific">Streptococcus pyogenes serotype M3 (strain ATCC BAA-595 / MGAS315)</name>
    <dbReference type="NCBI Taxonomy" id="198466"/>
    <lineage>
        <taxon>Bacteria</taxon>
        <taxon>Bacillati</taxon>
        <taxon>Bacillota</taxon>
        <taxon>Bacilli</taxon>
        <taxon>Lactobacillales</taxon>
        <taxon>Streptococcaceae</taxon>
        <taxon>Streptococcus</taxon>
    </lineage>
</organism>
<dbReference type="EC" id="3.1.26.5" evidence="1"/>
<dbReference type="EMBL" id="AE014074">
    <property type="protein sequence ID" value="AAM78782.1"/>
    <property type="molecule type" value="Genomic_DNA"/>
</dbReference>
<dbReference type="RefSeq" id="WP_002992035.1">
    <property type="nucleotide sequence ID" value="NC_004070.1"/>
</dbReference>
<dbReference type="SMR" id="P0DF24"/>
<dbReference type="GeneID" id="69900175"/>
<dbReference type="KEGG" id="spg:SpyM3_0175"/>
<dbReference type="HOGENOM" id="CLU_117179_9_1_9"/>
<dbReference type="Proteomes" id="UP000000564">
    <property type="component" value="Chromosome"/>
</dbReference>
<dbReference type="GO" id="GO:0030677">
    <property type="term" value="C:ribonuclease P complex"/>
    <property type="evidence" value="ECO:0007669"/>
    <property type="project" value="TreeGrafter"/>
</dbReference>
<dbReference type="GO" id="GO:0042781">
    <property type="term" value="F:3'-tRNA processing endoribonuclease activity"/>
    <property type="evidence" value="ECO:0007669"/>
    <property type="project" value="TreeGrafter"/>
</dbReference>
<dbReference type="GO" id="GO:0004526">
    <property type="term" value="F:ribonuclease P activity"/>
    <property type="evidence" value="ECO:0007669"/>
    <property type="project" value="UniProtKB-UniRule"/>
</dbReference>
<dbReference type="GO" id="GO:0000049">
    <property type="term" value="F:tRNA binding"/>
    <property type="evidence" value="ECO:0007669"/>
    <property type="project" value="UniProtKB-UniRule"/>
</dbReference>
<dbReference type="GO" id="GO:0001682">
    <property type="term" value="P:tRNA 5'-leader removal"/>
    <property type="evidence" value="ECO:0007669"/>
    <property type="project" value="UniProtKB-UniRule"/>
</dbReference>
<dbReference type="FunFam" id="3.30.230.10:FF:000021">
    <property type="entry name" value="Ribonuclease P protein component"/>
    <property type="match status" value="1"/>
</dbReference>
<dbReference type="Gene3D" id="3.30.230.10">
    <property type="match status" value="1"/>
</dbReference>
<dbReference type="HAMAP" id="MF_00227">
    <property type="entry name" value="RNase_P"/>
    <property type="match status" value="1"/>
</dbReference>
<dbReference type="InterPro" id="IPR020568">
    <property type="entry name" value="Ribosomal_Su5_D2-typ_SF"/>
</dbReference>
<dbReference type="InterPro" id="IPR014721">
    <property type="entry name" value="Ribsml_uS5_D2-typ_fold_subgr"/>
</dbReference>
<dbReference type="InterPro" id="IPR000100">
    <property type="entry name" value="RNase_P"/>
</dbReference>
<dbReference type="InterPro" id="IPR020539">
    <property type="entry name" value="RNase_P_CS"/>
</dbReference>
<dbReference type="NCBIfam" id="TIGR00188">
    <property type="entry name" value="rnpA"/>
    <property type="match status" value="1"/>
</dbReference>
<dbReference type="PANTHER" id="PTHR33992">
    <property type="entry name" value="RIBONUCLEASE P PROTEIN COMPONENT"/>
    <property type="match status" value="1"/>
</dbReference>
<dbReference type="PANTHER" id="PTHR33992:SF1">
    <property type="entry name" value="RIBONUCLEASE P PROTEIN COMPONENT"/>
    <property type="match status" value="1"/>
</dbReference>
<dbReference type="Pfam" id="PF00825">
    <property type="entry name" value="Ribonuclease_P"/>
    <property type="match status" value="1"/>
</dbReference>
<dbReference type="SUPFAM" id="SSF54211">
    <property type="entry name" value="Ribosomal protein S5 domain 2-like"/>
    <property type="match status" value="1"/>
</dbReference>
<dbReference type="PROSITE" id="PS00648">
    <property type="entry name" value="RIBONUCLEASE_P"/>
    <property type="match status" value="1"/>
</dbReference>
<proteinExistence type="inferred from homology"/>
<reference key="1">
    <citation type="journal article" date="2002" name="Proc. Natl. Acad. Sci. U.S.A.">
        <title>Genome sequence of a serotype M3 strain of group A Streptococcus: phage-encoded toxins, the high-virulence phenotype, and clone emergence.</title>
        <authorList>
            <person name="Beres S.B."/>
            <person name="Sylva G.L."/>
            <person name="Barbian K.D."/>
            <person name="Lei B."/>
            <person name="Hoff J.S."/>
            <person name="Mammarella N.D."/>
            <person name="Liu M.-Y."/>
            <person name="Smoot J.C."/>
            <person name="Porcella S.F."/>
            <person name="Parkins L.D."/>
            <person name="Campbell D.S."/>
            <person name="Smith T.M."/>
            <person name="McCormick J.K."/>
            <person name="Leung D.Y.M."/>
            <person name="Schlievert P.M."/>
            <person name="Musser J.M."/>
        </authorList>
    </citation>
    <scope>NUCLEOTIDE SEQUENCE [LARGE SCALE GENOMIC DNA]</scope>
    <source>
        <strain>ATCC BAA-595 / MGAS315</strain>
    </source>
</reference>
<comment type="function">
    <text evidence="1">RNaseP catalyzes the removal of the 5'-leader sequence from pre-tRNA to produce the mature 5'-terminus. It can also cleave other RNA substrates such as 4.5S RNA. The protein component plays an auxiliary but essential role in vivo by binding to the 5'-leader sequence and broadening the substrate specificity of the ribozyme.</text>
</comment>
<comment type="catalytic activity">
    <reaction evidence="1">
        <text>Endonucleolytic cleavage of RNA, removing 5'-extranucleotides from tRNA precursor.</text>
        <dbReference type="EC" id="3.1.26.5"/>
    </reaction>
</comment>
<comment type="subunit">
    <text evidence="1">Consists of a catalytic RNA component (M1 or rnpB) and a protein subunit.</text>
</comment>
<comment type="similarity">
    <text evidence="1">Belongs to the RnpA family.</text>
</comment>
<accession>P0DF24</accession>
<accession>P66690</accession>
<accession>Q8P2P9</accession>
<evidence type="ECO:0000255" key="1">
    <source>
        <dbReference type="HAMAP-Rule" id="MF_00227"/>
    </source>
</evidence>
<sequence length="119" mass="13866">MKKTYRVKREKDFQAIFKDGKSTANRKFVIYHLNRGQDHFRVGISVGKKIGNAVTRNAVKRKIRHVIMALGHQLKSEDFVVIARKGVESLEYQELQQNLHHVLKLAQLLEKGFESEEKH</sequence>